<proteinExistence type="inferred from homology"/>
<gene>
    <name evidence="1" type="primary">ilvC</name>
    <name type="ordered locus">MmarC5_0922</name>
</gene>
<reference key="1">
    <citation type="submission" date="2007-03" db="EMBL/GenBank/DDBJ databases">
        <title>Complete sequence of chromosome of Methanococcus maripaludis C5.</title>
        <authorList>
            <consortium name="US DOE Joint Genome Institute"/>
            <person name="Copeland A."/>
            <person name="Lucas S."/>
            <person name="Lapidus A."/>
            <person name="Barry K."/>
            <person name="Glavina del Rio T."/>
            <person name="Dalin E."/>
            <person name="Tice H."/>
            <person name="Pitluck S."/>
            <person name="Chertkov O."/>
            <person name="Brettin T."/>
            <person name="Bruce D."/>
            <person name="Han C."/>
            <person name="Detter J.C."/>
            <person name="Schmutz J."/>
            <person name="Larimer F."/>
            <person name="Land M."/>
            <person name="Hauser L."/>
            <person name="Kyrpides N."/>
            <person name="Mikhailova N."/>
            <person name="Sieprawska-Lupa M."/>
            <person name="Whitman W.B."/>
            <person name="Richardson P."/>
        </authorList>
    </citation>
    <scope>NUCLEOTIDE SEQUENCE [LARGE SCALE GENOMIC DNA]</scope>
    <source>
        <strain>C5 / ATCC BAA-1333</strain>
    </source>
</reference>
<protein>
    <recommendedName>
        <fullName evidence="1">Ketol-acid reductoisomerase (NADP(+))</fullName>
        <shortName evidence="1">KARI</shortName>
        <ecNumber evidence="1">1.1.1.86</ecNumber>
    </recommendedName>
    <alternativeName>
        <fullName evidence="1">Acetohydroxy-acid isomeroreductase</fullName>
        <shortName evidence="1">AHIR</shortName>
    </alternativeName>
    <alternativeName>
        <fullName evidence="1">Alpha-keto-beta-hydroxylacyl reductoisomerase</fullName>
    </alternativeName>
    <alternativeName>
        <fullName evidence="1">Ketol-acid reductoisomerase type 1</fullName>
    </alternativeName>
    <alternativeName>
        <fullName evidence="1">Ketol-acid reductoisomerase type I</fullName>
    </alternativeName>
</protein>
<organism>
    <name type="scientific">Methanococcus maripaludis (strain C5 / ATCC BAA-1333)</name>
    <dbReference type="NCBI Taxonomy" id="402880"/>
    <lineage>
        <taxon>Archaea</taxon>
        <taxon>Methanobacteriati</taxon>
        <taxon>Methanobacteriota</taxon>
        <taxon>Methanomada group</taxon>
        <taxon>Methanococci</taxon>
        <taxon>Methanococcales</taxon>
        <taxon>Methanococcaceae</taxon>
        <taxon>Methanococcus</taxon>
    </lineage>
</organism>
<sequence length="330" mass="36562">MKVFYDSDFKLDALKEKTIAVIGYGSQGRAQSLNMKDSGLNVVVGLRKNGASWENAKADGHNVMTIEEAAEKADIIHILIPDELQAEVYESQIKPYLKEGKTLSFSHGFNIHYGFIVPPKGVNVVLVAPKSPGKMVRRTYEEGFGVPGLICIEIDATNNAFDIVSAMAKGIGLSRAGVIQTTFKEETETDLFGEQAVLCGGVTELIKAGFETLVEAGYAPEMAYFETCHELKLIVDLIYQKGFKNMWNDVSNTAEYGGLTRRSRIVTADSKAAMKEILKEIQDGRFTKEFVLEKQVNHAHLKAMRRIEGDLQIEEVGAKLRKMCGLEKEE</sequence>
<comment type="function">
    <text evidence="1">Involved in the biosynthesis of branched-chain amino acids (BCAA). Catalyzes an alkyl-migration followed by a ketol-acid reduction of (S)-2-acetolactate (S2AL) to yield (R)-2,3-dihydroxy-isovalerate. In the isomerase reaction, S2AL is rearranged via a Mg-dependent methyl migration to produce 3-hydroxy-3-methyl-2-ketobutyrate (HMKB). In the reductase reaction, this 2-ketoacid undergoes a metal-dependent reduction by NADPH to yield (R)-2,3-dihydroxy-isovalerate.</text>
</comment>
<comment type="catalytic activity">
    <reaction evidence="1">
        <text>(2R)-2,3-dihydroxy-3-methylbutanoate + NADP(+) = (2S)-2-acetolactate + NADPH + H(+)</text>
        <dbReference type="Rhea" id="RHEA:22068"/>
        <dbReference type="ChEBI" id="CHEBI:15378"/>
        <dbReference type="ChEBI" id="CHEBI:49072"/>
        <dbReference type="ChEBI" id="CHEBI:57783"/>
        <dbReference type="ChEBI" id="CHEBI:58349"/>
        <dbReference type="ChEBI" id="CHEBI:58476"/>
        <dbReference type="EC" id="1.1.1.86"/>
    </reaction>
</comment>
<comment type="catalytic activity">
    <reaction evidence="1">
        <text>(2R,3R)-2,3-dihydroxy-3-methylpentanoate + NADP(+) = (S)-2-ethyl-2-hydroxy-3-oxobutanoate + NADPH + H(+)</text>
        <dbReference type="Rhea" id="RHEA:13493"/>
        <dbReference type="ChEBI" id="CHEBI:15378"/>
        <dbReference type="ChEBI" id="CHEBI:49256"/>
        <dbReference type="ChEBI" id="CHEBI:49258"/>
        <dbReference type="ChEBI" id="CHEBI:57783"/>
        <dbReference type="ChEBI" id="CHEBI:58349"/>
        <dbReference type="EC" id="1.1.1.86"/>
    </reaction>
</comment>
<comment type="cofactor">
    <cofactor evidence="1">
        <name>Mg(2+)</name>
        <dbReference type="ChEBI" id="CHEBI:18420"/>
    </cofactor>
    <text evidence="1">Binds 2 magnesium ions per subunit.</text>
</comment>
<comment type="pathway">
    <text evidence="1">Amino-acid biosynthesis; L-isoleucine biosynthesis; L-isoleucine from 2-oxobutanoate: step 2/4.</text>
</comment>
<comment type="pathway">
    <text evidence="1">Amino-acid biosynthesis; L-valine biosynthesis; L-valine from pyruvate: step 2/4.</text>
</comment>
<comment type="similarity">
    <text evidence="1">Belongs to the ketol-acid reductoisomerase family.</text>
</comment>
<keyword id="KW-0028">Amino-acid biosynthesis</keyword>
<keyword id="KW-0100">Branched-chain amino acid biosynthesis</keyword>
<keyword id="KW-0460">Magnesium</keyword>
<keyword id="KW-0479">Metal-binding</keyword>
<keyword id="KW-0521">NADP</keyword>
<keyword id="KW-0560">Oxidoreductase</keyword>
<name>ILVC_METM5</name>
<dbReference type="EC" id="1.1.1.86" evidence="1"/>
<dbReference type="EMBL" id="CP000609">
    <property type="protein sequence ID" value="ABO35228.1"/>
    <property type="molecule type" value="Genomic_DNA"/>
</dbReference>
<dbReference type="RefSeq" id="WP_011868682.1">
    <property type="nucleotide sequence ID" value="NC_009135.1"/>
</dbReference>
<dbReference type="SMR" id="A4FYE4"/>
<dbReference type="STRING" id="402880.MmarC5_0922"/>
<dbReference type="GeneID" id="4927620"/>
<dbReference type="KEGG" id="mmq:MmarC5_0922"/>
<dbReference type="eggNOG" id="arCOG04465">
    <property type="taxonomic scope" value="Archaea"/>
</dbReference>
<dbReference type="HOGENOM" id="CLU_033821_0_1_2"/>
<dbReference type="OrthoDB" id="6064at2157"/>
<dbReference type="UniPathway" id="UPA00047">
    <property type="reaction ID" value="UER00056"/>
</dbReference>
<dbReference type="UniPathway" id="UPA00049">
    <property type="reaction ID" value="UER00060"/>
</dbReference>
<dbReference type="Proteomes" id="UP000000253">
    <property type="component" value="Chromosome"/>
</dbReference>
<dbReference type="GO" id="GO:0004455">
    <property type="term" value="F:ketol-acid reductoisomerase activity"/>
    <property type="evidence" value="ECO:0007669"/>
    <property type="project" value="UniProtKB-UniRule"/>
</dbReference>
<dbReference type="GO" id="GO:0000287">
    <property type="term" value="F:magnesium ion binding"/>
    <property type="evidence" value="ECO:0007669"/>
    <property type="project" value="UniProtKB-UniRule"/>
</dbReference>
<dbReference type="GO" id="GO:0050661">
    <property type="term" value="F:NADP binding"/>
    <property type="evidence" value="ECO:0007669"/>
    <property type="project" value="InterPro"/>
</dbReference>
<dbReference type="GO" id="GO:0009097">
    <property type="term" value="P:isoleucine biosynthetic process"/>
    <property type="evidence" value="ECO:0007669"/>
    <property type="project" value="UniProtKB-UniRule"/>
</dbReference>
<dbReference type="GO" id="GO:0009099">
    <property type="term" value="P:L-valine biosynthetic process"/>
    <property type="evidence" value="ECO:0007669"/>
    <property type="project" value="UniProtKB-UniRule"/>
</dbReference>
<dbReference type="FunFam" id="3.40.50.720:FF:000023">
    <property type="entry name" value="Ketol-acid reductoisomerase (NADP(+))"/>
    <property type="match status" value="1"/>
</dbReference>
<dbReference type="Gene3D" id="6.10.240.10">
    <property type="match status" value="1"/>
</dbReference>
<dbReference type="Gene3D" id="3.40.50.720">
    <property type="entry name" value="NAD(P)-binding Rossmann-like Domain"/>
    <property type="match status" value="1"/>
</dbReference>
<dbReference type="HAMAP" id="MF_00435">
    <property type="entry name" value="IlvC"/>
    <property type="match status" value="1"/>
</dbReference>
<dbReference type="InterPro" id="IPR008927">
    <property type="entry name" value="6-PGluconate_DH-like_C_sf"/>
</dbReference>
<dbReference type="InterPro" id="IPR013023">
    <property type="entry name" value="KARI"/>
</dbReference>
<dbReference type="InterPro" id="IPR000506">
    <property type="entry name" value="KARI_C"/>
</dbReference>
<dbReference type="InterPro" id="IPR013116">
    <property type="entry name" value="KARI_N"/>
</dbReference>
<dbReference type="InterPro" id="IPR014359">
    <property type="entry name" value="KARI_prok"/>
</dbReference>
<dbReference type="InterPro" id="IPR036291">
    <property type="entry name" value="NAD(P)-bd_dom_sf"/>
</dbReference>
<dbReference type="NCBIfam" id="TIGR00465">
    <property type="entry name" value="ilvC"/>
    <property type="match status" value="1"/>
</dbReference>
<dbReference type="NCBIfam" id="NF004017">
    <property type="entry name" value="PRK05479.1"/>
    <property type="match status" value="1"/>
</dbReference>
<dbReference type="NCBIfam" id="NF009940">
    <property type="entry name" value="PRK13403.1"/>
    <property type="match status" value="1"/>
</dbReference>
<dbReference type="PANTHER" id="PTHR21371">
    <property type="entry name" value="KETOL-ACID REDUCTOISOMERASE, MITOCHONDRIAL"/>
    <property type="match status" value="1"/>
</dbReference>
<dbReference type="PANTHER" id="PTHR21371:SF1">
    <property type="entry name" value="KETOL-ACID REDUCTOISOMERASE, MITOCHONDRIAL"/>
    <property type="match status" value="1"/>
</dbReference>
<dbReference type="Pfam" id="PF01450">
    <property type="entry name" value="KARI_C"/>
    <property type="match status" value="1"/>
</dbReference>
<dbReference type="Pfam" id="PF07991">
    <property type="entry name" value="KARI_N"/>
    <property type="match status" value="1"/>
</dbReference>
<dbReference type="PIRSF" id="PIRSF000116">
    <property type="entry name" value="IlvC_gammaproteo"/>
    <property type="match status" value="1"/>
</dbReference>
<dbReference type="SUPFAM" id="SSF48179">
    <property type="entry name" value="6-phosphogluconate dehydrogenase C-terminal domain-like"/>
    <property type="match status" value="1"/>
</dbReference>
<dbReference type="SUPFAM" id="SSF51735">
    <property type="entry name" value="NAD(P)-binding Rossmann-fold domains"/>
    <property type="match status" value="1"/>
</dbReference>
<dbReference type="PROSITE" id="PS51851">
    <property type="entry name" value="KARI_C"/>
    <property type="match status" value="1"/>
</dbReference>
<dbReference type="PROSITE" id="PS51850">
    <property type="entry name" value="KARI_N"/>
    <property type="match status" value="1"/>
</dbReference>
<accession>A4FYE4</accession>
<evidence type="ECO:0000255" key="1">
    <source>
        <dbReference type="HAMAP-Rule" id="MF_00435"/>
    </source>
</evidence>
<evidence type="ECO:0000255" key="2">
    <source>
        <dbReference type="PROSITE-ProRule" id="PRU01197"/>
    </source>
</evidence>
<evidence type="ECO:0000255" key="3">
    <source>
        <dbReference type="PROSITE-ProRule" id="PRU01198"/>
    </source>
</evidence>
<feature type="chain" id="PRO_1000050530" description="Ketol-acid reductoisomerase (NADP(+))">
    <location>
        <begin position="1"/>
        <end position="330"/>
    </location>
</feature>
<feature type="domain" description="KARI N-terminal Rossmann" evidence="2">
    <location>
        <begin position="1"/>
        <end position="181"/>
    </location>
</feature>
<feature type="domain" description="KARI C-terminal knotted" evidence="3">
    <location>
        <begin position="182"/>
        <end position="327"/>
    </location>
</feature>
<feature type="active site" evidence="1">
    <location>
        <position position="107"/>
    </location>
</feature>
<feature type="binding site" evidence="1">
    <location>
        <begin position="24"/>
        <end position="27"/>
    </location>
    <ligand>
        <name>NADP(+)</name>
        <dbReference type="ChEBI" id="CHEBI:58349"/>
    </ligand>
</feature>
<feature type="binding site" evidence="1">
    <location>
        <position position="47"/>
    </location>
    <ligand>
        <name>NADP(+)</name>
        <dbReference type="ChEBI" id="CHEBI:58349"/>
    </ligand>
</feature>
<feature type="binding site" evidence="1">
    <location>
        <position position="52"/>
    </location>
    <ligand>
        <name>NADP(+)</name>
        <dbReference type="ChEBI" id="CHEBI:58349"/>
    </ligand>
</feature>
<feature type="binding site" evidence="1">
    <location>
        <begin position="82"/>
        <end position="85"/>
    </location>
    <ligand>
        <name>NADP(+)</name>
        <dbReference type="ChEBI" id="CHEBI:58349"/>
    </ligand>
</feature>
<feature type="binding site" evidence="1">
    <location>
        <position position="133"/>
    </location>
    <ligand>
        <name>NADP(+)</name>
        <dbReference type="ChEBI" id="CHEBI:58349"/>
    </ligand>
</feature>
<feature type="binding site" evidence="1">
    <location>
        <position position="190"/>
    </location>
    <ligand>
        <name>Mg(2+)</name>
        <dbReference type="ChEBI" id="CHEBI:18420"/>
        <label>1</label>
    </ligand>
</feature>
<feature type="binding site" evidence="1">
    <location>
        <position position="190"/>
    </location>
    <ligand>
        <name>Mg(2+)</name>
        <dbReference type="ChEBI" id="CHEBI:18420"/>
        <label>2</label>
    </ligand>
</feature>
<feature type="binding site" evidence="1">
    <location>
        <position position="194"/>
    </location>
    <ligand>
        <name>Mg(2+)</name>
        <dbReference type="ChEBI" id="CHEBI:18420"/>
        <label>1</label>
    </ligand>
</feature>
<feature type="binding site" evidence="1">
    <location>
        <position position="226"/>
    </location>
    <ligand>
        <name>Mg(2+)</name>
        <dbReference type="ChEBI" id="CHEBI:18420"/>
        <label>2</label>
    </ligand>
</feature>
<feature type="binding site" evidence="1">
    <location>
        <position position="230"/>
    </location>
    <ligand>
        <name>Mg(2+)</name>
        <dbReference type="ChEBI" id="CHEBI:18420"/>
        <label>2</label>
    </ligand>
</feature>
<feature type="binding site" evidence="1">
    <location>
        <position position="251"/>
    </location>
    <ligand>
        <name>substrate</name>
    </ligand>
</feature>